<reference key="1">
    <citation type="journal article" date="2007" name="J. Bacteriol.">
        <title>Genome-wide transcriptional changes in Streptococcus gordonii in response to competence signaling peptide.</title>
        <authorList>
            <person name="Vickerman M.M."/>
            <person name="Iobst S."/>
            <person name="Jesionowski A.M."/>
            <person name="Gill S.R."/>
        </authorList>
    </citation>
    <scope>NUCLEOTIDE SEQUENCE [LARGE SCALE GENOMIC DNA]</scope>
    <source>
        <strain>Challis / ATCC 35105 / BCRC 15272 / CH1 / DL1 / V288</strain>
    </source>
</reference>
<sequence length="296" mass="33093">MGQFTLTPSEQEIQAFLKQYKKYLSSSKNPYIRYFFRLEQATASVYTSGKLLLQGEEADKYALFFKETADLTRPPQKITYQAMIGTDEVGNGSYFGGLAVVASFVTKEQEDFLRKLGVGDSKTLTDQKIRQLAPILKEKITHQALLLSPKKYNQVIASGYNAVSVKVALHNQAIYLLLEKGIKPDQIVIDAFTSSTNYQRYVKQERNQVSQAIHLEEKAEGKYLAVAVSSIIARDLFLENLEILSQELGYQLPSGAGAKSDQVASQILKAYGMAGLETSAKLHFKNTQKAKQLLER</sequence>
<organism>
    <name type="scientific">Streptococcus gordonii (strain Challis / ATCC 35105 / BCRC 15272 / CH1 / DL1 / V288)</name>
    <dbReference type="NCBI Taxonomy" id="467705"/>
    <lineage>
        <taxon>Bacteria</taxon>
        <taxon>Bacillati</taxon>
        <taxon>Bacillota</taxon>
        <taxon>Bacilli</taxon>
        <taxon>Lactobacillales</taxon>
        <taxon>Streptococcaceae</taxon>
        <taxon>Streptococcus</taxon>
    </lineage>
</organism>
<evidence type="ECO:0000255" key="1">
    <source>
        <dbReference type="HAMAP-Rule" id="MF_00053"/>
    </source>
</evidence>
<evidence type="ECO:0000255" key="2">
    <source>
        <dbReference type="PROSITE-ProRule" id="PRU01319"/>
    </source>
</evidence>
<accession>A8AUW5</accession>
<comment type="function">
    <text evidence="1">Endonuclease that specifically degrades the RNA of RNA-DNA hybrids.</text>
</comment>
<comment type="catalytic activity">
    <reaction evidence="1">
        <text>Endonucleolytic cleavage to 5'-phosphomonoester.</text>
        <dbReference type="EC" id="3.1.26.4"/>
    </reaction>
</comment>
<comment type="cofactor">
    <cofactor evidence="1">
        <name>Mn(2+)</name>
        <dbReference type="ChEBI" id="CHEBI:29035"/>
    </cofactor>
    <cofactor evidence="1">
        <name>Mg(2+)</name>
        <dbReference type="ChEBI" id="CHEBI:18420"/>
    </cofactor>
    <text evidence="1">Manganese or magnesium. Binds 1 divalent metal ion per monomer in the absence of substrate. May bind a second metal ion after substrate binding.</text>
</comment>
<comment type="subcellular location">
    <subcellularLocation>
        <location evidence="1">Cytoplasm</location>
    </subcellularLocation>
</comment>
<comment type="similarity">
    <text evidence="1">Belongs to the RNase HII family. RnhC subfamily.</text>
</comment>
<feature type="chain" id="PRO_1000074943" description="Ribonuclease HIII">
    <location>
        <begin position="1"/>
        <end position="296"/>
    </location>
</feature>
<feature type="domain" description="RNase H type-2" evidence="2">
    <location>
        <begin position="81"/>
        <end position="296"/>
    </location>
</feature>
<feature type="binding site" evidence="1">
    <location>
        <position position="87"/>
    </location>
    <ligand>
        <name>a divalent metal cation</name>
        <dbReference type="ChEBI" id="CHEBI:60240"/>
    </ligand>
</feature>
<feature type="binding site" evidence="1">
    <location>
        <position position="88"/>
    </location>
    <ligand>
        <name>a divalent metal cation</name>
        <dbReference type="ChEBI" id="CHEBI:60240"/>
    </ligand>
</feature>
<feature type="binding site" evidence="1">
    <location>
        <position position="190"/>
    </location>
    <ligand>
        <name>a divalent metal cation</name>
        <dbReference type="ChEBI" id="CHEBI:60240"/>
    </ligand>
</feature>
<protein>
    <recommendedName>
        <fullName evidence="1">Ribonuclease HIII</fullName>
        <shortName evidence="1">RNase HIII</shortName>
        <ecNumber evidence="1">3.1.26.4</ecNumber>
    </recommendedName>
</protein>
<dbReference type="EC" id="3.1.26.4" evidence="1"/>
<dbReference type="EMBL" id="CP000725">
    <property type="protein sequence ID" value="ABV09215.1"/>
    <property type="molecule type" value="Genomic_DNA"/>
</dbReference>
<dbReference type="RefSeq" id="WP_011999787.1">
    <property type="nucleotide sequence ID" value="NC_009785.1"/>
</dbReference>
<dbReference type="SMR" id="A8AUW5"/>
<dbReference type="STRING" id="467705.SGO_0256"/>
<dbReference type="KEGG" id="sgo:SGO_0256"/>
<dbReference type="eggNOG" id="COG1039">
    <property type="taxonomic scope" value="Bacteria"/>
</dbReference>
<dbReference type="HOGENOM" id="CLU_059546_1_0_9"/>
<dbReference type="Proteomes" id="UP000001131">
    <property type="component" value="Chromosome"/>
</dbReference>
<dbReference type="GO" id="GO:0005737">
    <property type="term" value="C:cytoplasm"/>
    <property type="evidence" value="ECO:0007669"/>
    <property type="project" value="UniProtKB-SubCell"/>
</dbReference>
<dbReference type="GO" id="GO:0032299">
    <property type="term" value="C:ribonuclease H2 complex"/>
    <property type="evidence" value="ECO:0007669"/>
    <property type="project" value="TreeGrafter"/>
</dbReference>
<dbReference type="GO" id="GO:0000287">
    <property type="term" value="F:magnesium ion binding"/>
    <property type="evidence" value="ECO:0007669"/>
    <property type="project" value="UniProtKB-UniRule"/>
</dbReference>
<dbReference type="GO" id="GO:0003723">
    <property type="term" value="F:RNA binding"/>
    <property type="evidence" value="ECO:0007669"/>
    <property type="project" value="InterPro"/>
</dbReference>
<dbReference type="GO" id="GO:0004523">
    <property type="term" value="F:RNA-DNA hybrid ribonuclease activity"/>
    <property type="evidence" value="ECO:0007669"/>
    <property type="project" value="UniProtKB-UniRule"/>
</dbReference>
<dbReference type="GO" id="GO:0043137">
    <property type="term" value="P:DNA replication, removal of RNA primer"/>
    <property type="evidence" value="ECO:0007669"/>
    <property type="project" value="TreeGrafter"/>
</dbReference>
<dbReference type="GO" id="GO:0006298">
    <property type="term" value="P:mismatch repair"/>
    <property type="evidence" value="ECO:0007669"/>
    <property type="project" value="TreeGrafter"/>
</dbReference>
<dbReference type="CDD" id="cd06590">
    <property type="entry name" value="RNase_HII_bacteria_HIII_like"/>
    <property type="match status" value="1"/>
</dbReference>
<dbReference type="FunFam" id="3.30.420.10:FF:000047">
    <property type="entry name" value="Ribonuclease HIII"/>
    <property type="match status" value="1"/>
</dbReference>
<dbReference type="Gene3D" id="3.30.420.10">
    <property type="entry name" value="Ribonuclease H-like superfamily/Ribonuclease H"/>
    <property type="match status" value="1"/>
</dbReference>
<dbReference type="Gene3D" id="3.30.310.10">
    <property type="entry name" value="TATA-Binding Protein"/>
    <property type="match status" value="1"/>
</dbReference>
<dbReference type="HAMAP" id="MF_00053">
    <property type="entry name" value="RNase_HIII"/>
    <property type="match status" value="1"/>
</dbReference>
<dbReference type="InterPro" id="IPR001352">
    <property type="entry name" value="RNase_HII/HIII"/>
</dbReference>
<dbReference type="InterPro" id="IPR024567">
    <property type="entry name" value="RNase_HII/HIII_dom"/>
</dbReference>
<dbReference type="InterPro" id="IPR004641">
    <property type="entry name" value="RNase_HIII"/>
</dbReference>
<dbReference type="InterPro" id="IPR024568">
    <property type="entry name" value="RNase_HIII_N"/>
</dbReference>
<dbReference type="InterPro" id="IPR012337">
    <property type="entry name" value="RNaseH-like_sf"/>
</dbReference>
<dbReference type="InterPro" id="IPR036397">
    <property type="entry name" value="RNaseH_sf"/>
</dbReference>
<dbReference type="InterPro" id="IPR012295">
    <property type="entry name" value="TBP_dom_sf"/>
</dbReference>
<dbReference type="NCBIfam" id="TIGR00716">
    <property type="entry name" value="rnhC"/>
    <property type="match status" value="1"/>
</dbReference>
<dbReference type="PANTHER" id="PTHR10954:SF23">
    <property type="entry name" value="RIBONUCLEASE"/>
    <property type="match status" value="1"/>
</dbReference>
<dbReference type="PANTHER" id="PTHR10954">
    <property type="entry name" value="RIBONUCLEASE H2 SUBUNIT A"/>
    <property type="match status" value="1"/>
</dbReference>
<dbReference type="Pfam" id="PF11858">
    <property type="entry name" value="DUF3378"/>
    <property type="match status" value="1"/>
</dbReference>
<dbReference type="Pfam" id="PF01351">
    <property type="entry name" value="RNase_HII"/>
    <property type="match status" value="1"/>
</dbReference>
<dbReference type="PIRSF" id="PIRSF037748">
    <property type="entry name" value="RnhC"/>
    <property type="match status" value="1"/>
</dbReference>
<dbReference type="SUPFAM" id="SSF53098">
    <property type="entry name" value="Ribonuclease H-like"/>
    <property type="match status" value="1"/>
</dbReference>
<dbReference type="PROSITE" id="PS51975">
    <property type="entry name" value="RNASE_H_2"/>
    <property type="match status" value="1"/>
</dbReference>
<gene>
    <name evidence="1" type="primary">rnhC</name>
    <name type="ordered locus">SGO_0256</name>
</gene>
<keyword id="KW-0963">Cytoplasm</keyword>
<keyword id="KW-0255">Endonuclease</keyword>
<keyword id="KW-0378">Hydrolase</keyword>
<keyword id="KW-0460">Magnesium</keyword>
<keyword id="KW-0479">Metal-binding</keyword>
<keyword id="KW-0540">Nuclease</keyword>
<keyword id="KW-1185">Reference proteome</keyword>
<proteinExistence type="inferred from homology"/>
<name>RNH3_STRGC</name>